<protein>
    <recommendedName>
        <fullName>Oxygen regulatory protein NreC</fullName>
    </recommendedName>
    <alternativeName>
        <fullName>Nitrogen regulation protein C</fullName>
    </alternativeName>
</protein>
<reference key="1">
    <citation type="journal article" date="2004" name="Proc. Natl. Acad. Sci. U.S.A.">
        <title>Complete genomes of two clinical Staphylococcus aureus strains: evidence for the rapid evolution of virulence and drug resistance.</title>
        <authorList>
            <person name="Holden M.T.G."/>
            <person name="Feil E.J."/>
            <person name="Lindsay J.A."/>
            <person name="Peacock S.J."/>
            <person name="Day N.P.J."/>
            <person name="Enright M.C."/>
            <person name="Foster T.J."/>
            <person name="Moore C.E."/>
            <person name="Hurst L."/>
            <person name="Atkin R."/>
            <person name="Barron A."/>
            <person name="Bason N."/>
            <person name="Bentley S.D."/>
            <person name="Chillingworth C."/>
            <person name="Chillingworth T."/>
            <person name="Churcher C."/>
            <person name="Clark L."/>
            <person name="Corton C."/>
            <person name="Cronin A."/>
            <person name="Doggett J."/>
            <person name="Dowd L."/>
            <person name="Feltwell T."/>
            <person name="Hance Z."/>
            <person name="Harris B."/>
            <person name="Hauser H."/>
            <person name="Holroyd S."/>
            <person name="Jagels K."/>
            <person name="James K.D."/>
            <person name="Lennard N."/>
            <person name="Line A."/>
            <person name="Mayes R."/>
            <person name="Moule S."/>
            <person name="Mungall K."/>
            <person name="Ormond D."/>
            <person name="Quail M.A."/>
            <person name="Rabbinowitsch E."/>
            <person name="Rutherford K.M."/>
            <person name="Sanders M."/>
            <person name="Sharp S."/>
            <person name="Simmonds M."/>
            <person name="Stevens K."/>
            <person name="Whitehead S."/>
            <person name="Barrell B.G."/>
            <person name="Spratt B.G."/>
            <person name="Parkhill J."/>
        </authorList>
    </citation>
    <scope>NUCLEOTIDE SEQUENCE [LARGE SCALE GENOMIC DNA]</scope>
    <source>
        <strain>MRSA252</strain>
    </source>
</reference>
<evidence type="ECO:0000250" key="1"/>
<evidence type="ECO:0000255" key="2">
    <source>
        <dbReference type="PROSITE-ProRule" id="PRU00169"/>
    </source>
</evidence>
<evidence type="ECO:0000255" key="3">
    <source>
        <dbReference type="PROSITE-ProRule" id="PRU00411"/>
    </source>
</evidence>
<evidence type="ECO:0000305" key="4"/>
<sequence length="217" mass="24354">MKIVIADDHAVVRTGFSMILNYQNDMEVVATAADGVEAYQKVMEYKPDVLLMDLSMPPGESGLIATSKIADSFPETKILILTMFDDEEYLFHVLRNGAKGYILKNAPDEQLLLAIRTVYKGETYVDMKLTTSLVNEFVSNSNQDTANTSDPFKILSKRELEILPLIAKGYGNKEIAEKLFVSVKTVEAHKTHIMTKLGLKSKPELVEYALKKKLLEF</sequence>
<comment type="function">
    <text evidence="1">Member of the two-component regulatory system NreB/NreC involved in the control of dissimilatory nitrate/nitrite reduction in response to oxygen. Phosphorylated NreC binds to a GC-rich palindromic sequence at the promoters of the nitrate (narGHJI) and nitrite (nir) reductase operons, as well as the putative nitrate transporter gene narT, and activates their expression (By similarity).</text>
</comment>
<comment type="subcellular location">
    <subcellularLocation>
        <location evidence="4">Cytoplasm</location>
    </subcellularLocation>
</comment>
<comment type="PTM">
    <text evidence="1">Phosphorylated by NreB.</text>
</comment>
<organism>
    <name type="scientific">Staphylococcus aureus (strain MRSA252)</name>
    <dbReference type="NCBI Taxonomy" id="282458"/>
    <lineage>
        <taxon>Bacteria</taxon>
        <taxon>Bacillati</taxon>
        <taxon>Bacillota</taxon>
        <taxon>Bacilli</taxon>
        <taxon>Bacillales</taxon>
        <taxon>Staphylococcaceae</taxon>
        <taxon>Staphylococcus</taxon>
    </lineage>
</organism>
<proteinExistence type="inferred from homology"/>
<accession>Q6GE42</accession>
<name>NREC_STAAR</name>
<dbReference type="EMBL" id="BX571856">
    <property type="protein sequence ID" value="CAG41461.1"/>
    <property type="molecule type" value="Genomic_DNA"/>
</dbReference>
<dbReference type="RefSeq" id="WP_000706314.1">
    <property type="nucleotide sequence ID" value="NC_002952.2"/>
</dbReference>
<dbReference type="SMR" id="Q6GE42"/>
<dbReference type="KEGG" id="sar:SAR2480"/>
<dbReference type="HOGENOM" id="CLU_000445_90_1_9"/>
<dbReference type="Proteomes" id="UP000000596">
    <property type="component" value="Chromosome"/>
</dbReference>
<dbReference type="GO" id="GO:0005737">
    <property type="term" value="C:cytoplasm"/>
    <property type="evidence" value="ECO:0007669"/>
    <property type="project" value="UniProtKB-SubCell"/>
</dbReference>
<dbReference type="GO" id="GO:0003677">
    <property type="term" value="F:DNA binding"/>
    <property type="evidence" value="ECO:0007669"/>
    <property type="project" value="UniProtKB-KW"/>
</dbReference>
<dbReference type="GO" id="GO:0000160">
    <property type="term" value="P:phosphorelay signal transduction system"/>
    <property type="evidence" value="ECO:0007669"/>
    <property type="project" value="UniProtKB-KW"/>
</dbReference>
<dbReference type="GO" id="GO:0006355">
    <property type="term" value="P:regulation of DNA-templated transcription"/>
    <property type="evidence" value="ECO:0007669"/>
    <property type="project" value="InterPro"/>
</dbReference>
<dbReference type="CDD" id="cd06170">
    <property type="entry name" value="LuxR_C_like"/>
    <property type="match status" value="1"/>
</dbReference>
<dbReference type="CDD" id="cd17535">
    <property type="entry name" value="REC_NarL-like"/>
    <property type="match status" value="1"/>
</dbReference>
<dbReference type="Gene3D" id="3.40.50.2300">
    <property type="match status" value="1"/>
</dbReference>
<dbReference type="InterPro" id="IPR011006">
    <property type="entry name" value="CheY-like_superfamily"/>
</dbReference>
<dbReference type="InterPro" id="IPR016032">
    <property type="entry name" value="Sig_transdc_resp-reg_C-effctor"/>
</dbReference>
<dbReference type="InterPro" id="IPR001789">
    <property type="entry name" value="Sig_transdc_resp-reg_receiver"/>
</dbReference>
<dbReference type="InterPro" id="IPR000792">
    <property type="entry name" value="Tscrpt_reg_LuxR_C"/>
</dbReference>
<dbReference type="InterPro" id="IPR039420">
    <property type="entry name" value="WalR-like"/>
</dbReference>
<dbReference type="PANTHER" id="PTHR43214:SF37">
    <property type="entry name" value="TRANSCRIPTIONAL REGULATORY PROTEIN YDFI"/>
    <property type="match status" value="1"/>
</dbReference>
<dbReference type="PANTHER" id="PTHR43214">
    <property type="entry name" value="TWO-COMPONENT RESPONSE REGULATOR"/>
    <property type="match status" value="1"/>
</dbReference>
<dbReference type="Pfam" id="PF00196">
    <property type="entry name" value="GerE"/>
    <property type="match status" value="1"/>
</dbReference>
<dbReference type="Pfam" id="PF00072">
    <property type="entry name" value="Response_reg"/>
    <property type="match status" value="1"/>
</dbReference>
<dbReference type="PRINTS" id="PR00038">
    <property type="entry name" value="HTHLUXR"/>
</dbReference>
<dbReference type="SMART" id="SM00421">
    <property type="entry name" value="HTH_LUXR"/>
    <property type="match status" value="1"/>
</dbReference>
<dbReference type="SMART" id="SM00448">
    <property type="entry name" value="REC"/>
    <property type="match status" value="1"/>
</dbReference>
<dbReference type="SUPFAM" id="SSF46894">
    <property type="entry name" value="C-terminal effector domain of the bipartite response regulators"/>
    <property type="match status" value="1"/>
</dbReference>
<dbReference type="SUPFAM" id="SSF52172">
    <property type="entry name" value="CheY-like"/>
    <property type="match status" value="1"/>
</dbReference>
<dbReference type="PROSITE" id="PS00622">
    <property type="entry name" value="HTH_LUXR_1"/>
    <property type="match status" value="1"/>
</dbReference>
<dbReference type="PROSITE" id="PS50043">
    <property type="entry name" value="HTH_LUXR_2"/>
    <property type="match status" value="1"/>
</dbReference>
<dbReference type="PROSITE" id="PS50110">
    <property type="entry name" value="RESPONSE_REGULATORY"/>
    <property type="match status" value="1"/>
</dbReference>
<gene>
    <name type="primary">nreC</name>
    <name type="ordered locus">SAR2480</name>
</gene>
<keyword id="KW-0010">Activator</keyword>
<keyword id="KW-0963">Cytoplasm</keyword>
<keyword id="KW-0238">DNA-binding</keyword>
<keyword id="KW-0597">Phosphoprotein</keyword>
<keyword id="KW-0804">Transcription</keyword>
<keyword id="KW-0805">Transcription regulation</keyword>
<keyword id="KW-0902">Two-component regulatory system</keyword>
<feature type="chain" id="PRO_0000349346" description="Oxygen regulatory protein NreC">
    <location>
        <begin position="1"/>
        <end position="217"/>
    </location>
</feature>
<feature type="domain" description="Response regulatory" evidence="2">
    <location>
        <begin position="2"/>
        <end position="119"/>
    </location>
</feature>
<feature type="domain" description="HTH luxR-type" evidence="3">
    <location>
        <begin position="148"/>
        <end position="213"/>
    </location>
</feature>
<feature type="DNA-binding region" description="H-T-H motif" evidence="3">
    <location>
        <begin position="172"/>
        <end position="191"/>
    </location>
</feature>
<feature type="modified residue" description="4-aspartylphosphate" evidence="2">
    <location>
        <position position="53"/>
    </location>
</feature>